<gene>
    <name evidence="1" type="primary">lpxC</name>
    <name type="ordered locus">PLES_47851</name>
</gene>
<evidence type="ECO:0000255" key="1">
    <source>
        <dbReference type="HAMAP-Rule" id="MF_00388"/>
    </source>
</evidence>
<accession>B7UZI4</accession>
<feature type="chain" id="PRO_1000122808" description="UDP-3-O-acyl-N-acetylglucosamine deacetylase">
    <location>
        <begin position="1"/>
        <end position="303"/>
    </location>
</feature>
<feature type="active site" description="Proton donor" evidence="1">
    <location>
        <position position="264"/>
    </location>
</feature>
<feature type="binding site" evidence="1">
    <location>
        <position position="78"/>
    </location>
    <ligand>
        <name>Zn(2+)</name>
        <dbReference type="ChEBI" id="CHEBI:29105"/>
    </ligand>
</feature>
<feature type="binding site" evidence="1">
    <location>
        <position position="237"/>
    </location>
    <ligand>
        <name>Zn(2+)</name>
        <dbReference type="ChEBI" id="CHEBI:29105"/>
    </ligand>
</feature>
<feature type="binding site" evidence="1">
    <location>
        <position position="241"/>
    </location>
    <ligand>
        <name>Zn(2+)</name>
        <dbReference type="ChEBI" id="CHEBI:29105"/>
    </ligand>
</feature>
<keyword id="KW-0378">Hydrolase</keyword>
<keyword id="KW-0441">Lipid A biosynthesis</keyword>
<keyword id="KW-0444">Lipid biosynthesis</keyword>
<keyword id="KW-0443">Lipid metabolism</keyword>
<keyword id="KW-0479">Metal-binding</keyword>
<keyword id="KW-0862">Zinc</keyword>
<organism>
    <name type="scientific">Pseudomonas aeruginosa (strain LESB58)</name>
    <dbReference type="NCBI Taxonomy" id="557722"/>
    <lineage>
        <taxon>Bacteria</taxon>
        <taxon>Pseudomonadati</taxon>
        <taxon>Pseudomonadota</taxon>
        <taxon>Gammaproteobacteria</taxon>
        <taxon>Pseudomonadales</taxon>
        <taxon>Pseudomonadaceae</taxon>
        <taxon>Pseudomonas</taxon>
    </lineage>
</organism>
<dbReference type="EC" id="3.5.1.108" evidence="1"/>
<dbReference type="EMBL" id="FM209186">
    <property type="protein sequence ID" value="CAW29539.1"/>
    <property type="molecule type" value="Genomic_DNA"/>
</dbReference>
<dbReference type="RefSeq" id="WP_003094111.1">
    <property type="nucleotide sequence ID" value="NC_011770.1"/>
</dbReference>
<dbReference type="SMR" id="B7UZI4"/>
<dbReference type="KEGG" id="pag:PLES_47851"/>
<dbReference type="HOGENOM" id="CLU_046528_1_0_6"/>
<dbReference type="UniPathway" id="UPA00359">
    <property type="reaction ID" value="UER00478"/>
</dbReference>
<dbReference type="GO" id="GO:0016020">
    <property type="term" value="C:membrane"/>
    <property type="evidence" value="ECO:0007669"/>
    <property type="project" value="GOC"/>
</dbReference>
<dbReference type="GO" id="GO:0046872">
    <property type="term" value="F:metal ion binding"/>
    <property type="evidence" value="ECO:0007669"/>
    <property type="project" value="UniProtKB-KW"/>
</dbReference>
<dbReference type="GO" id="GO:0103117">
    <property type="term" value="F:UDP-3-O-acyl-N-acetylglucosamine deacetylase activity"/>
    <property type="evidence" value="ECO:0007669"/>
    <property type="project" value="UniProtKB-UniRule"/>
</dbReference>
<dbReference type="GO" id="GO:0009245">
    <property type="term" value="P:lipid A biosynthetic process"/>
    <property type="evidence" value="ECO:0007669"/>
    <property type="project" value="UniProtKB-UniRule"/>
</dbReference>
<dbReference type="FunFam" id="3.30.1700.10:FF:000001">
    <property type="entry name" value="UDP-3-O-acyl-N-acetylglucosamine deacetylase"/>
    <property type="match status" value="1"/>
</dbReference>
<dbReference type="FunFam" id="3.30.230.20:FF:000001">
    <property type="entry name" value="UDP-3-O-acyl-N-acetylglucosamine deacetylase"/>
    <property type="match status" value="1"/>
</dbReference>
<dbReference type="Gene3D" id="3.30.230.20">
    <property type="entry name" value="lpxc deacetylase, domain 1"/>
    <property type="match status" value="1"/>
</dbReference>
<dbReference type="Gene3D" id="3.30.1700.10">
    <property type="entry name" value="lpxc deacetylase, domain 2"/>
    <property type="match status" value="1"/>
</dbReference>
<dbReference type="HAMAP" id="MF_00388">
    <property type="entry name" value="LpxC"/>
    <property type="match status" value="1"/>
</dbReference>
<dbReference type="InterPro" id="IPR020568">
    <property type="entry name" value="Ribosomal_Su5_D2-typ_SF"/>
</dbReference>
<dbReference type="InterPro" id="IPR004463">
    <property type="entry name" value="UDP-acyl_GlcNac_deAcase"/>
</dbReference>
<dbReference type="InterPro" id="IPR011334">
    <property type="entry name" value="UDP-acyl_GlcNac_deAcase_C"/>
</dbReference>
<dbReference type="InterPro" id="IPR015870">
    <property type="entry name" value="UDP-acyl_N-AcGlcN_deAcase_N"/>
</dbReference>
<dbReference type="NCBIfam" id="TIGR00325">
    <property type="entry name" value="lpxC"/>
    <property type="match status" value="1"/>
</dbReference>
<dbReference type="PANTHER" id="PTHR33694">
    <property type="entry name" value="UDP-3-O-ACYL-N-ACETYLGLUCOSAMINE DEACETYLASE 1, MITOCHONDRIAL-RELATED"/>
    <property type="match status" value="1"/>
</dbReference>
<dbReference type="PANTHER" id="PTHR33694:SF1">
    <property type="entry name" value="UDP-3-O-ACYL-N-ACETYLGLUCOSAMINE DEACETYLASE 1, MITOCHONDRIAL-RELATED"/>
    <property type="match status" value="1"/>
</dbReference>
<dbReference type="Pfam" id="PF03331">
    <property type="entry name" value="LpxC"/>
    <property type="match status" value="1"/>
</dbReference>
<dbReference type="SUPFAM" id="SSF54211">
    <property type="entry name" value="Ribosomal protein S5 domain 2-like"/>
    <property type="match status" value="2"/>
</dbReference>
<proteinExistence type="inferred from homology"/>
<comment type="function">
    <text evidence="1">Catalyzes the hydrolysis of UDP-3-O-myristoyl-N-acetylglucosamine to form UDP-3-O-myristoylglucosamine and acetate, the committed step in lipid A biosynthesis.</text>
</comment>
<comment type="catalytic activity">
    <reaction evidence="1">
        <text>a UDP-3-O-[(3R)-3-hydroxyacyl]-N-acetyl-alpha-D-glucosamine + H2O = a UDP-3-O-[(3R)-3-hydroxyacyl]-alpha-D-glucosamine + acetate</text>
        <dbReference type="Rhea" id="RHEA:67816"/>
        <dbReference type="ChEBI" id="CHEBI:15377"/>
        <dbReference type="ChEBI" id="CHEBI:30089"/>
        <dbReference type="ChEBI" id="CHEBI:137740"/>
        <dbReference type="ChEBI" id="CHEBI:173225"/>
        <dbReference type="EC" id="3.5.1.108"/>
    </reaction>
</comment>
<comment type="cofactor">
    <cofactor evidence="1">
        <name>Zn(2+)</name>
        <dbReference type="ChEBI" id="CHEBI:29105"/>
    </cofactor>
</comment>
<comment type="pathway">
    <text evidence="1">Glycolipid biosynthesis; lipid IV(A) biosynthesis; lipid IV(A) from (3R)-3-hydroxytetradecanoyl-[acyl-carrier-protein] and UDP-N-acetyl-alpha-D-glucosamine: step 2/6.</text>
</comment>
<comment type="similarity">
    <text evidence="1">Belongs to the LpxC family.</text>
</comment>
<sequence>MIKQRTLKNIIRATGVGLHSGEKVYLTLKPAPVDTGIVFCRTDLDPVVEIPARAENVGETTMSTTLVKGDVKVDTVEHLLSAMAGLGIDNAYVELSASEVPIMDGSAGPFVFLIQSAGLQEQEAAKKFIRIKREVSVEEGDKRAVFVPFDGFKVSFEIDFDHPVFRGRTQQASVDFSSTSFVKEVSRARTFGFMRDIEYLRSQNLALGGSVENAIVVDENRVLNEDGLRYEDEFVKHKILDAIGDLYLLGNSLIGEFRGFKSGHALNNQLLRTLIADKDAWEVVTFEDARTAPISYMRPAAAV</sequence>
<protein>
    <recommendedName>
        <fullName evidence="1">UDP-3-O-acyl-N-acetylglucosamine deacetylase</fullName>
        <shortName evidence="1">UDP-3-O-acyl-GlcNAc deacetylase</shortName>
        <ecNumber evidence="1">3.5.1.108</ecNumber>
    </recommendedName>
    <alternativeName>
        <fullName evidence="1">UDP-3-O-[R-3-hydroxymyristoyl]-N-acetylglucosamine deacetylase</fullName>
    </alternativeName>
</protein>
<reference key="1">
    <citation type="journal article" date="2009" name="Genome Res.">
        <title>Newly introduced genomic prophage islands are critical determinants of in vivo competitiveness in the Liverpool epidemic strain of Pseudomonas aeruginosa.</title>
        <authorList>
            <person name="Winstanley C."/>
            <person name="Langille M.G.I."/>
            <person name="Fothergill J.L."/>
            <person name="Kukavica-Ibrulj I."/>
            <person name="Paradis-Bleau C."/>
            <person name="Sanschagrin F."/>
            <person name="Thomson N.R."/>
            <person name="Winsor G.L."/>
            <person name="Quail M.A."/>
            <person name="Lennard N."/>
            <person name="Bignell A."/>
            <person name="Clarke L."/>
            <person name="Seeger K."/>
            <person name="Saunders D."/>
            <person name="Harris D."/>
            <person name="Parkhill J."/>
            <person name="Hancock R.E.W."/>
            <person name="Brinkman F.S.L."/>
            <person name="Levesque R.C."/>
        </authorList>
    </citation>
    <scope>NUCLEOTIDE SEQUENCE [LARGE SCALE GENOMIC DNA]</scope>
    <source>
        <strain>LESB58</strain>
    </source>
</reference>
<name>LPXC_PSEA8</name>